<keyword id="KW-0004">4Fe-4S</keyword>
<keyword id="KW-0963">Cytoplasm</keyword>
<keyword id="KW-1015">Disulfide bond</keyword>
<keyword id="KW-0408">Iron</keyword>
<keyword id="KW-0411">Iron-sulfur</keyword>
<keyword id="KW-0479">Metal-binding</keyword>
<keyword id="KW-0489">Methyltransferase</keyword>
<keyword id="KW-0698">rRNA processing</keyword>
<keyword id="KW-0949">S-adenosyl-L-methionine</keyword>
<keyword id="KW-0808">Transferase</keyword>
<keyword id="KW-0819">tRNA processing</keyword>
<accession>A2C6T3</accession>
<sequence length="356" mass="39153">MSSTHLPGGNQALLGCSATELESWAVAEGQPAFRGRQLHDWLYAKGARSFDAITVLPKSWRISLQQRGLTIGRLLEVNRAVAVDDTTKLLLATVDGETIESVGIPTQQRLTVCLSSQVGCPMACRFCASGKGGLQRSLATHEIVDQVLSLREAMDRRPSHVVFMGMGEPLLNIEAVLASIRCLNIDLGIAQRRITVSTVGVPHTLPQLAELAMKRLGRAQFTLAVSLHAPNQELRERLIPTACAYPFETLLQDCRHYLAVTGRRVTFEYILLGALNDQPQHAEELAERVRGFQSHVNLIAYNPIDDEGFQRPNPETIEAFRRVLEQRGVAVSLRASRGLDQNAACGQLRRQHAAIG</sequence>
<evidence type="ECO:0000255" key="1">
    <source>
        <dbReference type="HAMAP-Rule" id="MF_01849"/>
    </source>
</evidence>
<evidence type="ECO:0000255" key="2">
    <source>
        <dbReference type="PROSITE-ProRule" id="PRU01266"/>
    </source>
</evidence>
<feature type="chain" id="PRO_0000350317" description="Probable dual-specificity RNA methyltransferase RlmN">
    <location>
        <begin position="1"/>
        <end position="356"/>
    </location>
</feature>
<feature type="domain" description="Radical SAM core" evidence="2">
    <location>
        <begin position="106"/>
        <end position="340"/>
    </location>
</feature>
<feature type="active site" description="Proton acceptor" evidence="1">
    <location>
        <position position="100"/>
    </location>
</feature>
<feature type="active site" description="S-methylcysteine intermediate" evidence="1">
    <location>
        <position position="345"/>
    </location>
</feature>
<feature type="binding site" evidence="1">
    <location>
        <position position="120"/>
    </location>
    <ligand>
        <name>[4Fe-4S] cluster</name>
        <dbReference type="ChEBI" id="CHEBI:49883"/>
        <note>4Fe-4S-S-AdoMet</note>
    </ligand>
</feature>
<feature type="binding site" evidence="1">
    <location>
        <position position="124"/>
    </location>
    <ligand>
        <name>[4Fe-4S] cluster</name>
        <dbReference type="ChEBI" id="CHEBI:49883"/>
        <note>4Fe-4S-S-AdoMet</note>
    </ligand>
</feature>
<feature type="binding site" evidence="1">
    <location>
        <position position="127"/>
    </location>
    <ligand>
        <name>[4Fe-4S] cluster</name>
        <dbReference type="ChEBI" id="CHEBI:49883"/>
        <note>4Fe-4S-S-AdoMet</note>
    </ligand>
</feature>
<feature type="binding site" evidence="1">
    <location>
        <begin position="167"/>
        <end position="168"/>
    </location>
    <ligand>
        <name>S-adenosyl-L-methionine</name>
        <dbReference type="ChEBI" id="CHEBI:59789"/>
    </ligand>
</feature>
<feature type="binding site" evidence="1">
    <location>
        <position position="197"/>
    </location>
    <ligand>
        <name>S-adenosyl-L-methionine</name>
        <dbReference type="ChEBI" id="CHEBI:59789"/>
    </ligand>
</feature>
<feature type="binding site" evidence="1">
    <location>
        <begin position="226"/>
        <end position="228"/>
    </location>
    <ligand>
        <name>S-adenosyl-L-methionine</name>
        <dbReference type="ChEBI" id="CHEBI:59789"/>
    </ligand>
</feature>
<feature type="binding site" evidence="1">
    <location>
        <position position="302"/>
    </location>
    <ligand>
        <name>S-adenosyl-L-methionine</name>
        <dbReference type="ChEBI" id="CHEBI:59789"/>
    </ligand>
</feature>
<feature type="disulfide bond" description="(transient)" evidence="1">
    <location>
        <begin position="113"/>
        <end position="345"/>
    </location>
</feature>
<reference key="1">
    <citation type="journal article" date="2007" name="PLoS Genet.">
        <title>Patterns and implications of gene gain and loss in the evolution of Prochlorococcus.</title>
        <authorList>
            <person name="Kettler G.C."/>
            <person name="Martiny A.C."/>
            <person name="Huang K."/>
            <person name="Zucker J."/>
            <person name="Coleman M.L."/>
            <person name="Rodrigue S."/>
            <person name="Chen F."/>
            <person name="Lapidus A."/>
            <person name="Ferriera S."/>
            <person name="Johnson J."/>
            <person name="Steglich C."/>
            <person name="Church G.M."/>
            <person name="Richardson P."/>
            <person name="Chisholm S.W."/>
        </authorList>
    </citation>
    <scope>NUCLEOTIDE SEQUENCE [LARGE SCALE GENOMIC DNA]</scope>
    <source>
        <strain>MIT 9303</strain>
    </source>
</reference>
<gene>
    <name evidence="1" type="primary">rlmN</name>
    <name type="ordered locus">P9303_04411</name>
</gene>
<organism>
    <name type="scientific">Prochlorococcus marinus (strain MIT 9303)</name>
    <dbReference type="NCBI Taxonomy" id="59922"/>
    <lineage>
        <taxon>Bacteria</taxon>
        <taxon>Bacillati</taxon>
        <taxon>Cyanobacteriota</taxon>
        <taxon>Cyanophyceae</taxon>
        <taxon>Synechococcales</taxon>
        <taxon>Prochlorococcaceae</taxon>
        <taxon>Prochlorococcus</taxon>
    </lineage>
</organism>
<name>RLMN_PROM3</name>
<protein>
    <recommendedName>
        <fullName evidence="1">Probable dual-specificity RNA methyltransferase RlmN</fullName>
        <ecNumber evidence="1">2.1.1.192</ecNumber>
    </recommendedName>
    <alternativeName>
        <fullName evidence="1">23S rRNA (adenine(2503)-C(2))-methyltransferase</fullName>
    </alternativeName>
    <alternativeName>
        <fullName evidence="1">23S rRNA m2A2503 methyltransferase</fullName>
    </alternativeName>
    <alternativeName>
        <fullName evidence="1">Ribosomal RNA large subunit methyltransferase N</fullName>
    </alternativeName>
    <alternativeName>
        <fullName evidence="1">tRNA (adenine(37)-C(2))-methyltransferase</fullName>
    </alternativeName>
    <alternativeName>
        <fullName evidence="1">tRNA m2A37 methyltransferase</fullName>
    </alternativeName>
</protein>
<comment type="function">
    <text evidence="1">Specifically methylates position 2 of adenine 2503 in 23S rRNA and position 2 of adenine 37 in tRNAs.</text>
</comment>
<comment type="catalytic activity">
    <reaction evidence="1">
        <text>adenosine(2503) in 23S rRNA + 2 reduced [2Fe-2S]-[ferredoxin] + 2 S-adenosyl-L-methionine = 2-methyladenosine(2503) in 23S rRNA + 5'-deoxyadenosine + L-methionine + 2 oxidized [2Fe-2S]-[ferredoxin] + S-adenosyl-L-homocysteine</text>
        <dbReference type="Rhea" id="RHEA:42916"/>
        <dbReference type="Rhea" id="RHEA-COMP:10000"/>
        <dbReference type="Rhea" id="RHEA-COMP:10001"/>
        <dbReference type="Rhea" id="RHEA-COMP:10152"/>
        <dbReference type="Rhea" id="RHEA-COMP:10282"/>
        <dbReference type="ChEBI" id="CHEBI:17319"/>
        <dbReference type="ChEBI" id="CHEBI:33737"/>
        <dbReference type="ChEBI" id="CHEBI:33738"/>
        <dbReference type="ChEBI" id="CHEBI:57844"/>
        <dbReference type="ChEBI" id="CHEBI:57856"/>
        <dbReference type="ChEBI" id="CHEBI:59789"/>
        <dbReference type="ChEBI" id="CHEBI:74411"/>
        <dbReference type="ChEBI" id="CHEBI:74497"/>
        <dbReference type="EC" id="2.1.1.192"/>
    </reaction>
</comment>
<comment type="catalytic activity">
    <reaction evidence="1">
        <text>adenosine(37) in tRNA + 2 reduced [2Fe-2S]-[ferredoxin] + 2 S-adenosyl-L-methionine = 2-methyladenosine(37) in tRNA + 5'-deoxyadenosine + L-methionine + 2 oxidized [2Fe-2S]-[ferredoxin] + S-adenosyl-L-homocysteine</text>
        <dbReference type="Rhea" id="RHEA:43332"/>
        <dbReference type="Rhea" id="RHEA-COMP:10000"/>
        <dbReference type="Rhea" id="RHEA-COMP:10001"/>
        <dbReference type="Rhea" id="RHEA-COMP:10162"/>
        <dbReference type="Rhea" id="RHEA-COMP:10485"/>
        <dbReference type="ChEBI" id="CHEBI:17319"/>
        <dbReference type="ChEBI" id="CHEBI:33737"/>
        <dbReference type="ChEBI" id="CHEBI:33738"/>
        <dbReference type="ChEBI" id="CHEBI:57844"/>
        <dbReference type="ChEBI" id="CHEBI:57856"/>
        <dbReference type="ChEBI" id="CHEBI:59789"/>
        <dbReference type="ChEBI" id="CHEBI:74411"/>
        <dbReference type="ChEBI" id="CHEBI:74497"/>
        <dbReference type="EC" id="2.1.1.192"/>
    </reaction>
</comment>
<comment type="cofactor">
    <cofactor evidence="1">
        <name>[4Fe-4S] cluster</name>
        <dbReference type="ChEBI" id="CHEBI:49883"/>
    </cofactor>
    <text evidence="1">Binds 1 [4Fe-4S] cluster. The cluster is coordinated with 3 cysteines and an exchangeable S-adenosyl-L-methionine.</text>
</comment>
<comment type="subcellular location">
    <subcellularLocation>
        <location evidence="1">Cytoplasm</location>
    </subcellularLocation>
</comment>
<comment type="miscellaneous">
    <text evidence="1">Reaction proceeds by a ping-pong mechanism involving intermediate methylation of a conserved cysteine residue.</text>
</comment>
<comment type="similarity">
    <text evidence="1">Belongs to the radical SAM superfamily. RlmN family.</text>
</comment>
<proteinExistence type="inferred from homology"/>
<dbReference type="EC" id="2.1.1.192" evidence="1"/>
<dbReference type="EMBL" id="CP000554">
    <property type="protein sequence ID" value="ABM77193.1"/>
    <property type="molecule type" value="Genomic_DNA"/>
</dbReference>
<dbReference type="RefSeq" id="WP_011825117.1">
    <property type="nucleotide sequence ID" value="NC_008820.1"/>
</dbReference>
<dbReference type="SMR" id="A2C6T3"/>
<dbReference type="STRING" id="59922.P9303_04411"/>
<dbReference type="KEGG" id="pmf:P9303_04411"/>
<dbReference type="HOGENOM" id="CLU_029101_1_1_3"/>
<dbReference type="BioCyc" id="PMAR59922:G1G80-409-MONOMER"/>
<dbReference type="Proteomes" id="UP000002274">
    <property type="component" value="Chromosome"/>
</dbReference>
<dbReference type="GO" id="GO:0005737">
    <property type="term" value="C:cytoplasm"/>
    <property type="evidence" value="ECO:0007669"/>
    <property type="project" value="UniProtKB-SubCell"/>
</dbReference>
<dbReference type="GO" id="GO:0051539">
    <property type="term" value="F:4 iron, 4 sulfur cluster binding"/>
    <property type="evidence" value="ECO:0007669"/>
    <property type="project" value="UniProtKB-UniRule"/>
</dbReference>
<dbReference type="GO" id="GO:0046872">
    <property type="term" value="F:metal ion binding"/>
    <property type="evidence" value="ECO:0007669"/>
    <property type="project" value="UniProtKB-KW"/>
</dbReference>
<dbReference type="GO" id="GO:0070040">
    <property type="term" value="F:rRNA (adenine(2503)-C2-)-methyltransferase activity"/>
    <property type="evidence" value="ECO:0007669"/>
    <property type="project" value="UniProtKB-UniRule"/>
</dbReference>
<dbReference type="GO" id="GO:0019843">
    <property type="term" value="F:rRNA binding"/>
    <property type="evidence" value="ECO:0007669"/>
    <property type="project" value="UniProtKB-UniRule"/>
</dbReference>
<dbReference type="GO" id="GO:0002935">
    <property type="term" value="F:tRNA (adenine(37)-C2)-methyltransferase activity"/>
    <property type="evidence" value="ECO:0007669"/>
    <property type="project" value="UniProtKB-UniRule"/>
</dbReference>
<dbReference type="GO" id="GO:0000049">
    <property type="term" value="F:tRNA binding"/>
    <property type="evidence" value="ECO:0007669"/>
    <property type="project" value="UniProtKB-UniRule"/>
</dbReference>
<dbReference type="GO" id="GO:0070475">
    <property type="term" value="P:rRNA base methylation"/>
    <property type="evidence" value="ECO:0007669"/>
    <property type="project" value="UniProtKB-UniRule"/>
</dbReference>
<dbReference type="GO" id="GO:0030488">
    <property type="term" value="P:tRNA methylation"/>
    <property type="evidence" value="ECO:0007669"/>
    <property type="project" value="UniProtKB-UniRule"/>
</dbReference>
<dbReference type="CDD" id="cd01335">
    <property type="entry name" value="Radical_SAM"/>
    <property type="match status" value="1"/>
</dbReference>
<dbReference type="FunFam" id="3.20.20.70:FF:000014">
    <property type="entry name" value="Probable dual-specificity RNA methyltransferase RlmN"/>
    <property type="match status" value="1"/>
</dbReference>
<dbReference type="Gene3D" id="1.10.150.530">
    <property type="match status" value="1"/>
</dbReference>
<dbReference type="Gene3D" id="3.20.20.70">
    <property type="entry name" value="Aldolase class I"/>
    <property type="match status" value="1"/>
</dbReference>
<dbReference type="HAMAP" id="MF_01849">
    <property type="entry name" value="RNA_methyltr_RlmN"/>
    <property type="match status" value="1"/>
</dbReference>
<dbReference type="InterPro" id="IPR013785">
    <property type="entry name" value="Aldolase_TIM"/>
</dbReference>
<dbReference type="InterPro" id="IPR040072">
    <property type="entry name" value="Methyltransferase_A"/>
</dbReference>
<dbReference type="InterPro" id="IPR048641">
    <property type="entry name" value="RlmN_N"/>
</dbReference>
<dbReference type="InterPro" id="IPR027492">
    <property type="entry name" value="RNA_MTrfase_RlmN"/>
</dbReference>
<dbReference type="InterPro" id="IPR004383">
    <property type="entry name" value="rRNA_lsu_MTrfase_RlmN/Cfr"/>
</dbReference>
<dbReference type="InterPro" id="IPR007197">
    <property type="entry name" value="rSAM"/>
</dbReference>
<dbReference type="NCBIfam" id="TIGR00048">
    <property type="entry name" value="rRNA_mod_RlmN"/>
    <property type="match status" value="1"/>
</dbReference>
<dbReference type="PANTHER" id="PTHR30544">
    <property type="entry name" value="23S RRNA METHYLTRANSFERASE"/>
    <property type="match status" value="1"/>
</dbReference>
<dbReference type="PANTHER" id="PTHR30544:SF5">
    <property type="entry name" value="RADICAL SAM CORE DOMAIN-CONTAINING PROTEIN"/>
    <property type="match status" value="1"/>
</dbReference>
<dbReference type="Pfam" id="PF04055">
    <property type="entry name" value="Radical_SAM"/>
    <property type="match status" value="1"/>
</dbReference>
<dbReference type="Pfam" id="PF21016">
    <property type="entry name" value="RlmN_N"/>
    <property type="match status" value="1"/>
</dbReference>
<dbReference type="PIRSF" id="PIRSF006004">
    <property type="entry name" value="CHP00048"/>
    <property type="match status" value="1"/>
</dbReference>
<dbReference type="SFLD" id="SFLDF00275">
    <property type="entry name" value="adenosine_C2_methyltransferase"/>
    <property type="match status" value="1"/>
</dbReference>
<dbReference type="SFLD" id="SFLDG01062">
    <property type="entry name" value="methyltransferase_(Class_A)"/>
    <property type="match status" value="1"/>
</dbReference>
<dbReference type="SUPFAM" id="SSF102114">
    <property type="entry name" value="Radical SAM enzymes"/>
    <property type="match status" value="1"/>
</dbReference>
<dbReference type="PROSITE" id="PS51918">
    <property type="entry name" value="RADICAL_SAM"/>
    <property type="match status" value="1"/>
</dbReference>